<organism>
    <name type="scientific">Caulobacter sp. (strain K31)</name>
    <dbReference type="NCBI Taxonomy" id="366602"/>
    <lineage>
        <taxon>Bacteria</taxon>
        <taxon>Pseudomonadati</taxon>
        <taxon>Pseudomonadota</taxon>
        <taxon>Alphaproteobacteria</taxon>
        <taxon>Caulobacterales</taxon>
        <taxon>Caulobacteraceae</taxon>
        <taxon>Caulobacter</taxon>
    </lineage>
</organism>
<reference key="1">
    <citation type="submission" date="2008-01" db="EMBL/GenBank/DDBJ databases">
        <title>Complete sequence of chromosome of Caulobacter sp. K31.</title>
        <authorList>
            <consortium name="US DOE Joint Genome Institute"/>
            <person name="Copeland A."/>
            <person name="Lucas S."/>
            <person name="Lapidus A."/>
            <person name="Barry K."/>
            <person name="Glavina del Rio T."/>
            <person name="Dalin E."/>
            <person name="Tice H."/>
            <person name="Pitluck S."/>
            <person name="Bruce D."/>
            <person name="Goodwin L."/>
            <person name="Thompson L.S."/>
            <person name="Brettin T."/>
            <person name="Detter J.C."/>
            <person name="Han C."/>
            <person name="Schmutz J."/>
            <person name="Larimer F."/>
            <person name="Land M."/>
            <person name="Hauser L."/>
            <person name="Kyrpides N."/>
            <person name="Kim E."/>
            <person name="Stephens C."/>
            <person name="Richardson P."/>
        </authorList>
    </citation>
    <scope>NUCLEOTIDE SEQUENCE [LARGE SCALE GENOMIC DNA]</scope>
    <source>
        <strain>K31</strain>
    </source>
</reference>
<comment type="function">
    <text evidence="1">Catalyzes the decarboxylative condensation of pimeloyl-[acyl-carrier protein] and L-alanine to produce 8-amino-7-oxononanoate (AON), [acyl-carrier protein], and carbon dioxide.</text>
</comment>
<comment type="catalytic activity">
    <reaction>
        <text>6-carboxyhexanoyl-[ACP] + L-alanine + H(+) = (8S)-8-amino-7-oxononanoate + holo-[ACP] + CO2</text>
        <dbReference type="Rhea" id="RHEA:42288"/>
        <dbReference type="Rhea" id="RHEA-COMP:9685"/>
        <dbReference type="Rhea" id="RHEA-COMP:9955"/>
        <dbReference type="ChEBI" id="CHEBI:15378"/>
        <dbReference type="ChEBI" id="CHEBI:16526"/>
        <dbReference type="ChEBI" id="CHEBI:57972"/>
        <dbReference type="ChEBI" id="CHEBI:64479"/>
        <dbReference type="ChEBI" id="CHEBI:78846"/>
        <dbReference type="ChEBI" id="CHEBI:149468"/>
        <dbReference type="EC" id="2.3.1.47"/>
    </reaction>
</comment>
<comment type="cofactor">
    <cofactor evidence="1">
        <name>pyridoxal 5'-phosphate</name>
        <dbReference type="ChEBI" id="CHEBI:597326"/>
    </cofactor>
</comment>
<comment type="pathway">
    <text>Cofactor biosynthesis; biotin biosynthesis.</text>
</comment>
<comment type="subunit">
    <text evidence="1">Homodimer.</text>
</comment>
<comment type="similarity">
    <text evidence="2">Belongs to the class-II pyridoxal-phosphate-dependent aminotransferase family. BioF subfamily.</text>
</comment>
<proteinExistence type="inferred from homology"/>
<gene>
    <name type="primary">bioF</name>
    <name type="ordered locus">Caul_2875</name>
</gene>
<accession>B0SZS9</accession>
<sequence length="383" mass="39831">MHSLDTYAADKIERLEAASLLRRLKPTQRSAGVVVERDGRKLLSFSCNDYLGLAHHPKVKAAAQAAIETYGAGSGASRLVTGDHPLLSELEARLARLKGAEACVVFGSGYLANTGLIPTFAGKGDIVLLDELAHACIWAGAQLSGARIIPFAHNDTDHLAALLAEHRSSARHAIVATDGVFSMDGDIAPLDWLSAVCEANDAWLLSDDAHGVGVLAQGKGSAALFPEAQIPFQMGTLSKALGSYGGYVCASQAVVDLLKTRARTLVYSTGLPPAAAAAALAALDIVEAEPALTALPLAKARAFTQAVGLPPAASPIVPVIIGEAQDALDASRALEAEGFLVVAIRPPTVPAGAARLRIAFSAEHPDAEIARLAELVRPYVKAR</sequence>
<keyword id="KW-0093">Biotin biosynthesis</keyword>
<keyword id="KW-0663">Pyridoxal phosphate</keyword>
<keyword id="KW-0808">Transferase</keyword>
<dbReference type="EC" id="2.3.1.47"/>
<dbReference type="EMBL" id="CP000927">
    <property type="protein sequence ID" value="ABZ72002.1"/>
    <property type="molecule type" value="Genomic_DNA"/>
</dbReference>
<dbReference type="SMR" id="B0SZS9"/>
<dbReference type="STRING" id="366602.Caul_2875"/>
<dbReference type="KEGG" id="cak:Caul_2875"/>
<dbReference type="eggNOG" id="COG0156">
    <property type="taxonomic scope" value="Bacteria"/>
</dbReference>
<dbReference type="HOGENOM" id="CLU_015846_11_2_5"/>
<dbReference type="OrthoDB" id="9807157at2"/>
<dbReference type="UniPathway" id="UPA00078"/>
<dbReference type="GO" id="GO:0008710">
    <property type="term" value="F:8-amino-7-oxononanoate synthase activity"/>
    <property type="evidence" value="ECO:0007669"/>
    <property type="project" value="UniProtKB-EC"/>
</dbReference>
<dbReference type="GO" id="GO:0030170">
    <property type="term" value="F:pyridoxal phosphate binding"/>
    <property type="evidence" value="ECO:0007669"/>
    <property type="project" value="InterPro"/>
</dbReference>
<dbReference type="GO" id="GO:0009102">
    <property type="term" value="P:biotin biosynthetic process"/>
    <property type="evidence" value="ECO:0007669"/>
    <property type="project" value="UniProtKB-UniPathway"/>
</dbReference>
<dbReference type="Gene3D" id="3.90.1150.10">
    <property type="entry name" value="Aspartate Aminotransferase, domain 1"/>
    <property type="match status" value="1"/>
</dbReference>
<dbReference type="Gene3D" id="3.40.640.10">
    <property type="entry name" value="Type I PLP-dependent aspartate aminotransferase-like (Major domain)"/>
    <property type="match status" value="1"/>
</dbReference>
<dbReference type="InterPro" id="IPR001917">
    <property type="entry name" value="Aminotrans_II_pyridoxalP_BS"/>
</dbReference>
<dbReference type="InterPro" id="IPR004839">
    <property type="entry name" value="Aminotransferase_I/II_large"/>
</dbReference>
<dbReference type="InterPro" id="IPR050087">
    <property type="entry name" value="AON_synthase_class-II"/>
</dbReference>
<dbReference type="InterPro" id="IPR004723">
    <property type="entry name" value="AONS_Archaea/Proteobacteria"/>
</dbReference>
<dbReference type="InterPro" id="IPR015424">
    <property type="entry name" value="PyrdxlP-dep_Trfase"/>
</dbReference>
<dbReference type="InterPro" id="IPR015421">
    <property type="entry name" value="PyrdxlP-dep_Trfase_major"/>
</dbReference>
<dbReference type="InterPro" id="IPR015422">
    <property type="entry name" value="PyrdxlP-dep_Trfase_small"/>
</dbReference>
<dbReference type="NCBIfam" id="TIGR00858">
    <property type="entry name" value="bioF"/>
    <property type="match status" value="1"/>
</dbReference>
<dbReference type="PANTHER" id="PTHR13693:SF100">
    <property type="entry name" value="8-AMINO-7-OXONONANOATE SYNTHASE"/>
    <property type="match status" value="1"/>
</dbReference>
<dbReference type="PANTHER" id="PTHR13693">
    <property type="entry name" value="CLASS II AMINOTRANSFERASE/8-AMINO-7-OXONONANOATE SYNTHASE"/>
    <property type="match status" value="1"/>
</dbReference>
<dbReference type="Pfam" id="PF00155">
    <property type="entry name" value="Aminotran_1_2"/>
    <property type="match status" value="1"/>
</dbReference>
<dbReference type="SUPFAM" id="SSF53383">
    <property type="entry name" value="PLP-dependent transferases"/>
    <property type="match status" value="1"/>
</dbReference>
<dbReference type="PROSITE" id="PS00599">
    <property type="entry name" value="AA_TRANSFER_CLASS_2"/>
    <property type="match status" value="1"/>
</dbReference>
<feature type="chain" id="PRO_0000380950" description="Putative 8-amino-7-oxononanoate synthase">
    <location>
        <begin position="1"/>
        <end position="383"/>
    </location>
</feature>
<feature type="binding site" evidence="1">
    <location>
        <position position="22"/>
    </location>
    <ligand>
        <name>substrate</name>
    </ligand>
</feature>
<feature type="binding site" evidence="1">
    <location>
        <begin position="109"/>
        <end position="110"/>
    </location>
    <ligand>
        <name>pyridoxal 5'-phosphate</name>
        <dbReference type="ChEBI" id="CHEBI:597326"/>
    </ligand>
</feature>
<feature type="binding site" evidence="1">
    <location>
        <position position="134"/>
    </location>
    <ligand>
        <name>substrate</name>
    </ligand>
</feature>
<feature type="binding site" evidence="1">
    <location>
        <position position="182"/>
    </location>
    <ligand>
        <name>pyridoxal 5'-phosphate</name>
        <dbReference type="ChEBI" id="CHEBI:597326"/>
    </ligand>
</feature>
<feature type="binding site" evidence="1">
    <location>
        <begin position="207"/>
        <end position="210"/>
    </location>
    <ligand>
        <name>pyridoxal 5'-phosphate</name>
        <dbReference type="ChEBI" id="CHEBI:597326"/>
    </ligand>
</feature>
<feature type="binding site" evidence="1">
    <location>
        <begin position="236"/>
        <end position="239"/>
    </location>
    <ligand>
        <name>pyridoxal 5'-phosphate</name>
        <dbReference type="ChEBI" id="CHEBI:597326"/>
    </ligand>
</feature>
<feature type="binding site" evidence="1">
    <location>
        <position position="348"/>
    </location>
    <ligand>
        <name>substrate</name>
    </ligand>
</feature>
<feature type="modified residue" description="N6-(pyridoxal phosphate)lysine" evidence="1">
    <location>
        <position position="239"/>
    </location>
</feature>
<protein>
    <recommendedName>
        <fullName>Putative 8-amino-7-oxononanoate synthase</fullName>
        <shortName>AONS</shortName>
        <ecNumber>2.3.1.47</ecNumber>
    </recommendedName>
    <alternativeName>
        <fullName>7-keto-8-amino-pelargonic acid synthase</fullName>
        <shortName>7-KAP synthase</shortName>
    </alternativeName>
    <alternativeName>
        <fullName>8-amino-7-ketopelargonate synthase</fullName>
    </alternativeName>
</protein>
<name>BIOF_CAUSK</name>
<evidence type="ECO:0000250" key="1"/>
<evidence type="ECO:0000305" key="2"/>